<feature type="chain" id="PRO_0000358348" description="NADH-quinone oxidoreductase subunit B">
    <location>
        <begin position="1"/>
        <end position="158"/>
    </location>
</feature>
<feature type="binding site" evidence="2">
    <location>
        <position position="37"/>
    </location>
    <ligand>
        <name>[4Fe-4S] cluster</name>
        <dbReference type="ChEBI" id="CHEBI:49883"/>
    </ligand>
</feature>
<feature type="binding site" evidence="2">
    <location>
        <position position="38"/>
    </location>
    <ligand>
        <name>[4Fe-4S] cluster</name>
        <dbReference type="ChEBI" id="CHEBI:49883"/>
    </ligand>
</feature>
<feature type="binding site" evidence="2">
    <location>
        <position position="102"/>
    </location>
    <ligand>
        <name>[4Fe-4S] cluster</name>
        <dbReference type="ChEBI" id="CHEBI:49883"/>
    </ligand>
</feature>
<feature type="binding site" evidence="2">
    <location>
        <position position="132"/>
    </location>
    <ligand>
        <name>[4Fe-4S] cluster</name>
        <dbReference type="ChEBI" id="CHEBI:49883"/>
    </ligand>
</feature>
<dbReference type="EC" id="7.1.1.-" evidence="2"/>
<dbReference type="EMBL" id="CR555306">
    <property type="protein sequence ID" value="CAI08865.1"/>
    <property type="molecule type" value="Genomic_DNA"/>
</dbReference>
<dbReference type="RefSeq" id="WP_011238548.1">
    <property type="nucleotide sequence ID" value="NC_006513.1"/>
</dbReference>
<dbReference type="SMR" id="Q5P1E9"/>
<dbReference type="STRING" id="76114.ebA4835"/>
<dbReference type="KEGG" id="eba:ebA4835"/>
<dbReference type="eggNOG" id="COG0377">
    <property type="taxonomic scope" value="Bacteria"/>
</dbReference>
<dbReference type="HOGENOM" id="CLU_055737_7_3_4"/>
<dbReference type="OrthoDB" id="9786737at2"/>
<dbReference type="Proteomes" id="UP000006552">
    <property type="component" value="Chromosome"/>
</dbReference>
<dbReference type="GO" id="GO:0005886">
    <property type="term" value="C:plasma membrane"/>
    <property type="evidence" value="ECO:0007669"/>
    <property type="project" value="UniProtKB-SubCell"/>
</dbReference>
<dbReference type="GO" id="GO:0045271">
    <property type="term" value="C:respiratory chain complex I"/>
    <property type="evidence" value="ECO:0007669"/>
    <property type="project" value="TreeGrafter"/>
</dbReference>
<dbReference type="GO" id="GO:0051539">
    <property type="term" value="F:4 iron, 4 sulfur cluster binding"/>
    <property type="evidence" value="ECO:0007669"/>
    <property type="project" value="UniProtKB-KW"/>
</dbReference>
<dbReference type="GO" id="GO:0005506">
    <property type="term" value="F:iron ion binding"/>
    <property type="evidence" value="ECO:0007669"/>
    <property type="project" value="UniProtKB-UniRule"/>
</dbReference>
<dbReference type="GO" id="GO:0008137">
    <property type="term" value="F:NADH dehydrogenase (ubiquinone) activity"/>
    <property type="evidence" value="ECO:0007669"/>
    <property type="project" value="InterPro"/>
</dbReference>
<dbReference type="GO" id="GO:0050136">
    <property type="term" value="F:NADH:ubiquinone reductase (non-electrogenic) activity"/>
    <property type="evidence" value="ECO:0007669"/>
    <property type="project" value="UniProtKB-UniRule"/>
</dbReference>
<dbReference type="GO" id="GO:0048038">
    <property type="term" value="F:quinone binding"/>
    <property type="evidence" value="ECO:0007669"/>
    <property type="project" value="UniProtKB-KW"/>
</dbReference>
<dbReference type="GO" id="GO:0009060">
    <property type="term" value="P:aerobic respiration"/>
    <property type="evidence" value="ECO:0007669"/>
    <property type="project" value="TreeGrafter"/>
</dbReference>
<dbReference type="GO" id="GO:0015990">
    <property type="term" value="P:electron transport coupled proton transport"/>
    <property type="evidence" value="ECO:0007669"/>
    <property type="project" value="TreeGrafter"/>
</dbReference>
<dbReference type="FunFam" id="3.40.50.12280:FF:000001">
    <property type="entry name" value="NADH-quinone oxidoreductase subunit B 2"/>
    <property type="match status" value="1"/>
</dbReference>
<dbReference type="Gene3D" id="3.40.50.12280">
    <property type="match status" value="1"/>
</dbReference>
<dbReference type="HAMAP" id="MF_01356">
    <property type="entry name" value="NDH1_NuoB"/>
    <property type="match status" value="1"/>
</dbReference>
<dbReference type="InterPro" id="IPR006137">
    <property type="entry name" value="NADH_UbQ_OxRdtase-like_20kDa"/>
</dbReference>
<dbReference type="InterPro" id="IPR006138">
    <property type="entry name" value="NADH_UQ_OxRdtase_20Kd_su"/>
</dbReference>
<dbReference type="NCBIfam" id="TIGR01957">
    <property type="entry name" value="nuoB_fam"/>
    <property type="match status" value="1"/>
</dbReference>
<dbReference type="NCBIfam" id="NF005012">
    <property type="entry name" value="PRK06411.1"/>
    <property type="match status" value="1"/>
</dbReference>
<dbReference type="PANTHER" id="PTHR11995">
    <property type="entry name" value="NADH DEHYDROGENASE"/>
    <property type="match status" value="1"/>
</dbReference>
<dbReference type="PANTHER" id="PTHR11995:SF14">
    <property type="entry name" value="NADH DEHYDROGENASE [UBIQUINONE] IRON-SULFUR PROTEIN 7, MITOCHONDRIAL"/>
    <property type="match status" value="1"/>
</dbReference>
<dbReference type="Pfam" id="PF01058">
    <property type="entry name" value="Oxidored_q6"/>
    <property type="match status" value="1"/>
</dbReference>
<dbReference type="SUPFAM" id="SSF56770">
    <property type="entry name" value="HydA/Nqo6-like"/>
    <property type="match status" value="1"/>
</dbReference>
<dbReference type="PROSITE" id="PS01150">
    <property type="entry name" value="COMPLEX1_20K"/>
    <property type="match status" value="1"/>
</dbReference>
<reference key="1">
    <citation type="journal article" date="2005" name="Arch. Microbiol.">
        <title>The genome sequence of an anaerobic aromatic-degrading denitrifying bacterium, strain EbN1.</title>
        <authorList>
            <person name="Rabus R."/>
            <person name="Kube M."/>
            <person name="Heider J."/>
            <person name="Beck A."/>
            <person name="Heitmann K."/>
            <person name="Widdel F."/>
            <person name="Reinhardt R."/>
        </authorList>
    </citation>
    <scope>NUCLEOTIDE SEQUENCE [LARGE SCALE GENOMIC DNA]</scope>
    <source>
        <strain>DSM 19018 / LMG 30748 / EbN1</strain>
    </source>
</reference>
<accession>Q5P1E9</accession>
<organism>
    <name type="scientific">Aromatoleum aromaticum (strain DSM 19018 / LMG 30748 / EbN1)</name>
    <name type="common">Azoarcus sp. (strain EbN1)</name>
    <dbReference type="NCBI Taxonomy" id="76114"/>
    <lineage>
        <taxon>Bacteria</taxon>
        <taxon>Pseudomonadati</taxon>
        <taxon>Pseudomonadota</taxon>
        <taxon>Betaproteobacteria</taxon>
        <taxon>Rhodocyclales</taxon>
        <taxon>Rhodocyclaceae</taxon>
        <taxon>Aromatoleum</taxon>
    </lineage>
</organism>
<protein>
    <recommendedName>
        <fullName evidence="2">NADH-quinone oxidoreductase subunit B</fullName>
        <ecNumber evidence="2">7.1.1.-</ecNumber>
    </recommendedName>
    <alternativeName>
        <fullName evidence="2">NADH dehydrogenase I subunit B</fullName>
    </alternativeName>
    <alternativeName>
        <fullName evidence="2">NDH-1 subunit B</fullName>
    </alternativeName>
</protein>
<comment type="function">
    <text evidence="1">NDH-1 shuttles electrons from NADH, via FMN and iron-sulfur (Fe-S) centers, to quinones in the respiratory chain. Couples the redox reaction to proton translocation (for every two electrons transferred, four hydrogen ions are translocated across the cytoplasmic membrane), and thus conserves the redox energy in a proton gradient (By similarity).</text>
</comment>
<comment type="catalytic activity">
    <reaction evidence="2">
        <text>a quinone + NADH + 5 H(+)(in) = a quinol + NAD(+) + 4 H(+)(out)</text>
        <dbReference type="Rhea" id="RHEA:57888"/>
        <dbReference type="ChEBI" id="CHEBI:15378"/>
        <dbReference type="ChEBI" id="CHEBI:24646"/>
        <dbReference type="ChEBI" id="CHEBI:57540"/>
        <dbReference type="ChEBI" id="CHEBI:57945"/>
        <dbReference type="ChEBI" id="CHEBI:132124"/>
    </reaction>
</comment>
<comment type="cofactor">
    <cofactor evidence="2">
        <name>[4Fe-4S] cluster</name>
        <dbReference type="ChEBI" id="CHEBI:49883"/>
    </cofactor>
    <text evidence="2">Binds 1 [4Fe-4S] cluster.</text>
</comment>
<comment type="subunit">
    <text evidence="2">NDH-1 is composed of 14 different subunits. Subunits NuoB, C, D, E, F, and G constitute the peripheral sector of the complex.</text>
</comment>
<comment type="subcellular location">
    <subcellularLocation>
        <location evidence="2">Cell inner membrane</location>
        <topology evidence="2">Peripheral membrane protein</topology>
        <orientation evidence="2">Cytoplasmic side</orientation>
    </subcellularLocation>
</comment>
<comment type="similarity">
    <text evidence="2">Belongs to the complex I 20 kDa subunit family.</text>
</comment>
<sequence length="158" mass="17494">MSIEGVFREGFVTTSLDAVINWTRTGSLWPMTFGLACCAVEMIHAGCARYDLDRFGVVFRPSPRQSDLMIVAGTLCNKMAPALRKVYDQMAEPRWVISMGSCANGGGYYHYSYSVVRGCDRIVPVDVYVPGCPPTAEALLYGIIQLQNKIKRTNTIAR</sequence>
<keyword id="KW-0004">4Fe-4S</keyword>
<keyword id="KW-0997">Cell inner membrane</keyword>
<keyword id="KW-1003">Cell membrane</keyword>
<keyword id="KW-0408">Iron</keyword>
<keyword id="KW-0411">Iron-sulfur</keyword>
<keyword id="KW-0472">Membrane</keyword>
<keyword id="KW-0479">Metal-binding</keyword>
<keyword id="KW-0520">NAD</keyword>
<keyword id="KW-0874">Quinone</keyword>
<keyword id="KW-1185">Reference proteome</keyword>
<keyword id="KW-1278">Translocase</keyword>
<keyword id="KW-0813">Transport</keyword>
<keyword id="KW-0830">Ubiquinone</keyword>
<name>NUOB_AROAE</name>
<evidence type="ECO:0000250" key="1"/>
<evidence type="ECO:0000255" key="2">
    <source>
        <dbReference type="HAMAP-Rule" id="MF_01356"/>
    </source>
</evidence>
<gene>
    <name evidence="2" type="primary">nuoB</name>
    <name type="ordered locus">AZOSEA27400</name>
    <name type="ORF">ebA4835</name>
</gene>
<proteinExistence type="inferred from homology"/>